<protein>
    <recommendedName>
        <fullName>Uncharacterized protein R44</fullName>
    </recommendedName>
</protein>
<organismHost>
    <name type="scientific">Acanthamoeba polyphaga</name>
    <name type="common">Amoeba</name>
    <dbReference type="NCBI Taxonomy" id="5757"/>
</organismHost>
<dbReference type="EMBL" id="AY653733">
    <property type="protein sequence ID" value="AAV50319.1"/>
    <property type="molecule type" value="Genomic_DNA"/>
</dbReference>
<dbReference type="KEGG" id="vg:9924630"/>
<dbReference type="OrthoDB" id="22867at10239"/>
<dbReference type="Proteomes" id="UP000001134">
    <property type="component" value="Genome"/>
</dbReference>
<dbReference type="InterPro" id="IPR043840">
    <property type="entry name" value="DUF5868"/>
</dbReference>
<dbReference type="Pfam" id="PF19186">
    <property type="entry name" value="DUF5868"/>
    <property type="match status" value="1"/>
</dbReference>
<name>YR044_MIMIV</name>
<proteinExistence type="inferred from homology"/>
<organism>
    <name type="scientific">Acanthamoeba polyphaga mimivirus</name>
    <name type="common">APMV</name>
    <dbReference type="NCBI Taxonomy" id="212035"/>
    <lineage>
        <taxon>Viruses</taxon>
        <taxon>Varidnaviria</taxon>
        <taxon>Bamfordvirae</taxon>
        <taxon>Nucleocytoviricota</taxon>
        <taxon>Megaviricetes</taxon>
        <taxon>Imitervirales</taxon>
        <taxon>Mimiviridae</taxon>
        <taxon>Megamimivirinae</taxon>
        <taxon>Mimivirus</taxon>
        <taxon>Mimivirus bradfordmassiliense</taxon>
    </lineage>
</organism>
<comment type="similarity">
    <text evidence="1">Belongs to the mimivirus L31/R44 family.</text>
</comment>
<accession>Q5UPB7</accession>
<sequence length="215" mass="25787">MKYIKNNVLDLGSKDSYIKFNLSTVIDYIYNQIPLDYAEMNKIYKNICTELDDSPEFQSNLTEDDEYVYKFNEILKKCYDEQEMTKRKIFDPDFLNYKLINELHIYLTKKSPKKLVIKSINSIKLVNNEGVNTDINGTTNVDWKLHFWPEFTIQNSECLTLHDIIIACYKIKSHKFENWYELYCNMFTEFYVFQNSNDKNIWKEIFAVIKFDHGC</sequence>
<keyword id="KW-1185">Reference proteome</keyword>
<gene>
    <name type="ordered locus">MIMI_R44</name>
</gene>
<feature type="chain" id="PRO_0000243961" description="Uncharacterized protein R44">
    <location>
        <begin position="1"/>
        <end position="215"/>
    </location>
</feature>
<reference key="1">
    <citation type="journal article" date="2004" name="Science">
        <title>The 1.2-megabase genome sequence of Mimivirus.</title>
        <authorList>
            <person name="Raoult D."/>
            <person name="Audic S."/>
            <person name="Robert C."/>
            <person name="Abergel C."/>
            <person name="Renesto P."/>
            <person name="Ogata H."/>
            <person name="La Scola B."/>
            <person name="Susan M."/>
            <person name="Claverie J.-M."/>
        </authorList>
    </citation>
    <scope>NUCLEOTIDE SEQUENCE [LARGE SCALE GENOMIC DNA]</scope>
    <source>
        <strain>Rowbotham-Bradford</strain>
    </source>
</reference>
<evidence type="ECO:0000305" key="1"/>